<proteinExistence type="inferred from homology"/>
<keyword id="KW-0963">Cytoplasm</keyword>
<keyword id="KW-0251">Elongation factor</keyword>
<keyword id="KW-0342">GTP-binding</keyword>
<keyword id="KW-0378">Hydrolase</keyword>
<keyword id="KW-0460">Magnesium</keyword>
<keyword id="KW-0479">Metal-binding</keyword>
<keyword id="KW-0547">Nucleotide-binding</keyword>
<keyword id="KW-0597">Phosphoprotein</keyword>
<keyword id="KW-0648">Protein biosynthesis</keyword>
<comment type="function">
    <text evidence="2">GTP hydrolase that promotes the GTP-dependent binding of aminoacyl-tRNA to the A-site of ribosomes during protein biosynthesis.</text>
</comment>
<comment type="catalytic activity">
    <reaction evidence="2">
        <text>GTP + H2O = GDP + phosphate + H(+)</text>
        <dbReference type="Rhea" id="RHEA:19669"/>
        <dbReference type="ChEBI" id="CHEBI:15377"/>
        <dbReference type="ChEBI" id="CHEBI:15378"/>
        <dbReference type="ChEBI" id="CHEBI:37565"/>
        <dbReference type="ChEBI" id="CHEBI:43474"/>
        <dbReference type="ChEBI" id="CHEBI:58189"/>
        <dbReference type="EC" id="3.6.5.3"/>
    </reaction>
    <physiologicalReaction direction="left-to-right" evidence="2">
        <dbReference type="Rhea" id="RHEA:19670"/>
    </physiologicalReaction>
</comment>
<comment type="subunit">
    <text evidence="2">Monomer.</text>
</comment>
<comment type="subcellular location">
    <subcellularLocation>
        <location evidence="2">Cytoplasm</location>
    </subcellularLocation>
</comment>
<comment type="PTM">
    <text evidence="1">Phosphorylated on serine and/or threonine residue(s). Dephosphorylated by stp (By similarity).</text>
</comment>
<comment type="similarity">
    <text evidence="2">Belongs to the TRAFAC class translation factor GTPase superfamily. Classic translation factor GTPase family. EF-Tu/EF-1A subfamily.</text>
</comment>
<reference key="1">
    <citation type="journal article" date="2001" name="Science">
        <title>Comparative genomics of Listeria species.</title>
        <authorList>
            <person name="Glaser P."/>
            <person name="Frangeul L."/>
            <person name="Buchrieser C."/>
            <person name="Rusniok C."/>
            <person name="Amend A."/>
            <person name="Baquero F."/>
            <person name="Berche P."/>
            <person name="Bloecker H."/>
            <person name="Brandt P."/>
            <person name="Chakraborty T."/>
            <person name="Charbit A."/>
            <person name="Chetouani F."/>
            <person name="Couve E."/>
            <person name="de Daruvar A."/>
            <person name="Dehoux P."/>
            <person name="Domann E."/>
            <person name="Dominguez-Bernal G."/>
            <person name="Duchaud E."/>
            <person name="Durant L."/>
            <person name="Dussurget O."/>
            <person name="Entian K.-D."/>
            <person name="Fsihi H."/>
            <person name="Garcia-del Portillo F."/>
            <person name="Garrido P."/>
            <person name="Gautier L."/>
            <person name="Goebel W."/>
            <person name="Gomez-Lopez N."/>
            <person name="Hain T."/>
            <person name="Hauf J."/>
            <person name="Jackson D."/>
            <person name="Jones L.-M."/>
            <person name="Kaerst U."/>
            <person name="Kreft J."/>
            <person name="Kuhn M."/>
            <person name="Kunst F."/>
            <person name="Kurapkat G."/>
            <person name="Madueno E."/>
            <person name="Maitournam A."/>
            <person name="Mata Vicente J."/>
            <person name="Ng E."/>
            <person name="Nedjari H."/>
            <person name="Nordsiek G."/>
            <person name="Novella S."/>
            <person name="de Pablos B."/>
            <person name="Perez-Diaz J.-C."/>
            <person name="Purcell R."/>
            <person name="Remmel B."/>
            <person name="Rose M."/>
            <person name="Schlueter T."/>
            <person name="Simoes N."/>
            <person name="Tierrez A."/>
            <person name="Vazquez-Boland J.-A."/>
            <person name="Voss H."/>
            <person name="Wehland J."/>
            <person name="Cossart P."/>
        </authorList>
    </citation>
    <scope>NUCLEOTIDE SEQUENCE [LARGE SCALE GENOMIC DNA]</scope>
    <source>
        <strain>ATCC BAA-680 / CLIP 11262</strain>
    </source>
</reference>
<accession>Q927I6</accession>
<name>EFTU_LISIN</name>
<evidence type="ECO:0000250" key="1"/>
<evidence type="ECO:0000255" key="2">
    <source>
        <dbReference type="HAMAP-Rule" id="MF_00118"/>
    </source>
</evidence>
<protein>
    <recommendedName>
        <fullName evidence="2">Elongation factor Tu</fullName>
        <shortName evidence="2">EF-Tu</shortName>
        <ecNumber evidence="2">3.6.5.3</ecNumber>
    </recommendedName>
</protein>
<dbReference type="EC" id="3.6.5.3" evidence="2"/>
<dbReference type="EMBL" id="AL596173">
    <property type="protein sequence ID" value="CAC98028.1"/>
    <property type="molecule type" value="Genomic_DNA"/>
</dbReference>
<dbReference type="PIR" id="AD1782">
    <property type="entry name" value="AD1782"/>
</dbReference>
<dbReference type="RefSeq" id="WP_003739865.1">
    <property type="nucleotide sequence ID" value="NC_003212.1"/>
</dbReference>
<dbReference type="SMR" id="Q927I6"/>
<dbReference type="STRING" id="272626.gene:17567189"/>
<dbReference type="GeneID" id="93236075"/>
<dbReference type="KEGG" id="lin:tufA"/>
<dbReference type="eggNOG" id="COG0050">
    <property type="taxonomic scope" value="Bacteria"/>
</dbReference>
<dbReference type="HOGENOM" id="CLU_007265_0_0_9"/>
<dbReference type="OrthoDB" id="9804504at2"/>
<dbReference type="Proteomes" id="UP000002513">
    <property type="component" value="Chromosome"/>
</dbReference>
<dbReference type="GO" id="GO:0005829">
    <property type="term" value="C:cytosol"/>
    <property type="evidence" value="ECO:0007669"/>
    <property type="project" value="TreeGrafter"/>
</dbReference>
<dbReference type="GO" id="GO:0005525">
    <property type="term" value="F:GTP binding"/>
    <property type="evidence" value="ECO:0007669"/>
    <property type="project" value="UniProtKB-UniRule"/>
</dbReference>
<dbReference type="GO" id="GO:0003924">
    <property type="term" value="F:GTPase activity"/>
    <property type="evidence" value="ECO:0007669"/>
    <property type="project" value="InterPro"/>
</dbReference>
<dbReference type="GO" id="GO:0003746">
    <property type="term" value="F:translation elongation factor activity"/>
    <property type="evidence" value="ECO:0007669"/>
    <property type="project" value="UniProtKB-UniRule"/>
</dbReference>
<dbReference type="CDD" id="cd01884">
    <property type="entry name" value="EF_Tu"/>
    <property type="match status" value="1"/>
</dbReference>
<dbReference type="CDD" id="cd03697">
    <property type="entry name" value="EFTU_II"/>
    <property type="match status" value="1"/>
</dbReference>
<dbReference type="CDD" id="cd03707">
    <property type="entry name" value="EFTU_III"/>
    <property type="match status" value="1"/>
</dbReference>
<dbReference type="FunFam" id="2.40.30.10:FF:000001">
    <property type="entry name" value="Elongation factor Tu"/>
    <property type="match status" value="1"/>
</dbReference>
<dbReference type="FunFam" id="3.40.50.300:FF:000003">
    <property type="entry name" value="Elongation factor Tu"/>
    <property type="match status" value="1"/>
</dbReference>
<dbReference type="Gene3D" id="3.40.50.300">
    <property type="entry name" value="P-loop containing nucleotide triphosphate hydrolases"/>
    <property type="match status" value="1"/>
</dbReference>
<dbReference type="Gene3D" id="2.40.30.10">
    <property type="entry name" value="Translation factors"/>
    <property type="match status" value="2"/>
</dbReference>
<dbReference type="HAMAP" id="MF_00118_B">
    <property type="entry name" value="EF_Tu_B"/>
    <property type="match status" value="1"/>
</dbReference>
<dbReference type="InterPro" id="IPR041709">
    <property type="entry name" value="EF-Tu_GTP-bd"/>
</dbReference>
<dbReference type="InterPro" id="IPR050055">
    <property type="entry name" value="EF-Tu_GTPase"/>
</dbReference>
<dbReference type="InterPro" id="IPR004161">
    <property type="entry name" value="EFTu-like_2"/>
</dbReference>
<dbReference type="InterPro" id="IPR033720">
    <property type="entry name" value="EFTU_2"/>
</dbReference>
<dbReference type="InterPro" id="IPR031157">
    <property type="entry name" value="G_TR_CS"/>
</dbReference>
<dbReference type="InterPro" id="IPR027417">
    <property type="entry name" value="P-loop_NTPase"/>
</dbReference>
<dbReference type="InterPro" id="IPR005225">
    <property type="entry name" value="Small_GTP-bd"/>
</dbReference>
<dbReference type="InterPro" id="IPR000795">
    <property type="entry name" value="T_Tr_GTP-bd_dom"/>
</dbReference>
<dbReference type="InterPro" id="IPR009000">
    <property type="entry name" value="Transl_B-barrel_sf"/>
</dbReference>
<dbReference type="InterPro" id="IPR009001">
    <property type="entry name" value="Transl_elong_EF1A/Init_IF2_C"/>
</dbReference>
<dbReference type="InterPro" id="IPR004541">
    <property type="entry name" value="Transl_elong_EFTu/EF1A_bac/org"/>
</dbReference>
<dbReference type="InterPro" id="IPR004160">
    <property type="entry name" value="Transl_elong_EFTu/EF1A_C"/>
</dbReference>
<dbReference type="NCBIfam" id="TIGR00485">
    <property type="entry name" value="EF-Tu"/>
    <property type="match status" value="1"/>
</dbReference>
<dbReference type="NCBIfam" id="NF000766">
    <property type="entry name" value="PRK00049.1"/>
    <property type="match status" value="1"/>
</dbReference>
<dbReference type="NCBIfam" id="NF009372">
    <property type="entry name" value="PRK12735.1"/>
    <property type="match status" value="1"/>
</dbReference>
<dbReference type="NCBIfam" id="NF009373">
    <property type="entry name" value="PRK12736.1"/>
    <property type="match status" value="1"/>
</dbReference>
<dbReference type="NCBIfam" id="TIGR00231">
    <property type="entry name" value="small_GTP"/>
    <property type="match status" value="1"/>
</dbReference>
<dbReference type="PANTHER" id="PTHR43721:SF22">
    <property type="entry name" value="ELONGATION FACTOR TU, MITOCHONDRIAL"/>
    <property type="match status" value="1"/>
</dbReference>
<dbReference type="PANTHER" id="PTHR43721">
    <property type="entry name" value="ELONGATION FACTOR TU-RELATED"/>
    <property type="match status" value="1"/>
</dbReference>
<dbReference type="Pfam" id="PF00009">
    <property type="entry name" value="GTP_EFTU"/>
    <property type="match status" value="1"/>
</dbReference>
<dbReference type="Pfam" id="PF03144">
    <property type="entry name" value="GTP_EFTU_D2"/>
    <property type="match status" value="1"/>
</dbReference>
<dbReference type="Pfam" id="PF03143">
    <property type="entry name" value="GTP_EFTU_D3"/>
    <property type="match status" value="1"/>
</dbReference>
<dbReference type="PRINTS" id="PR00315">
    <property type="entry name" value="ELONGATNFCT"/>
</dbReference>
<dbReference type="SUPFAM" id="SSF50465">
    <property type="entry name" value="EF-Tu/eEF-1alpha/eIF2-gamma C-terminal domain"/>
    <property type="match status" value="1"/>
</dbReference>
<dbReference type="SUPFAM" id="SSF52540">
    <property type="entry name" value="P-loop containing nucleoside triphosphate hydrolases"/>
    <property type="match status" value="1"/>
</dbReference>
<dbReference type="SUPFAM" id="SSF50447">
    <property type="entry name" value="Translation proteins"/>
    <property type="match status" value="1"/>
</dbReference>
<dbReference type="PROSITE" id="PS00301">
    <property type="entry name" value="G_TR_1"/>
    <property type="match status" value="1"/>
</dbReference>
<dbReference type="PROSITE" id="PS51722">
    <property type="entry name" value="G_TR_2"/>
    <property type="match status" value="1"/>
</dbReference>
<feature type="chain" id="PRO_0000091341" description="Elongation factor Tu">
    <location>
        <begin position="1"/>
        <end position="395"/>
    </location>
</feature>
<feature type="domain" description="tr-type G">
    <location>
        <begin position="10"/>
        <end position="204"/>
    </location>
</feature>
<feature type="region of interest" description="G1" evidence="1">
    <location>
        <begin position="19"/>
        <end position="26"/>
    </location>
</feature>
<feature type="region of interest" description="G2" evidence="1">
    <location>
        <begin position="60"/>
        <end position="64"/>
    </location>
</feature>
<feature type="region of interest" description="G3" evidence="1">
    <location>
        <begin position="81"/>
        <end position="84"/>
    </location>
</feature>
<feature type="region of interest" description="G4" evidence="1">
    <location>
        <begin position="136"/>
        <end position="139"/>
    </location>
</feature>
<feature type="region of interest" description="G5" evidence="1">
    <location>
        <begin position="174"/>
        <end position="176"/>
    </location>
</feature>
<feature type="binding site" evidence="2">
    <location>
        <begin position="19"/>
        <end position="26"/>
    </location>
    <ligand>
        <name>GTP</name>
        <dbReference type="ChEBI" id="CHEBI:37565"/>
    </ligand>
</feature>
<feature type="binding site" evidence="2">
    <location>
        <position position="26"/>
    </location>
    <ligand>
        <name>Mg(2+)</name>
        <dbReference type="ChEBI" id="CHEBI:18420"/>
    </ligand>
</feature>
<feature type="binding site" evidence="2">
    <location>
        <begin position="81"/>
        <end position="85"/>
    </location>
    <ligand>
        <name>GTP</name>
        <dbReference type="ChEBI" id="CHEBI:37565"/>
    </ligand>
</feature>
<feature type="binding site" evidence="2">
    <location>
        <begin position="136"/>
        <end position="139"/>
    </location>
    <ligand>
        <name>GTP</name>
        <dbReference type="ChEBI" id="CHEBI:37565"/>
    </ligand>
</feature>
<gene>
    <name evidence="2" type="primary">tuf</name>
    <name type="synonym">tufA</name>
    <name type="ordered locus">lin2802</name>
</gene>
<organism>
    <name type="scientific">Listeria innocua serovar 6a (strain ATCC BAA-680 / CLIP 11262)</name>
    <dbReference type="NCBI Taxonomy" id="272626"/>
    <lineage>
        <taxon>Bacteria</taxon>
        <taxon>Bacillati</taxon>
        <taxon>Bacillota</taxon>
        <taxon>Bacilli</taxon>
        <taxon>Bacillales</taxon>
        <taxon>Listeriaceae</taxon>
        <taxon>Listeria</taxon>
    </lineage>
</organism>
<sequence>MAKEKFDRSKPHVNIGTIGHVDHGKTTLTAAITTVLAKKGFADAQAYDQIDGAPEERERGITISTAHVEYQTDNRHYAHVDCPGHADYVKNMITGAAQMDGAILVVSAADGPMPQTREHILLSRQVGVPYIVVFMNKCDMVDDEELLELVEMEIRDLLTEYEFPGDDIPVIKGSALKALQGEADWEAKIDELMEAVDSYIPTPERDTDKPFMMPVEDVFSITGRGTVATGRVERGQVKVGDEVEVIGIEEESKKVVVTGVEMFRKLLDYAEAGDNIGALLRGVAREDIQRGQVLAKPGSITPHTNFKAETYVLTKEEGGRHTPFFNNYRPQFYFRTTDVTGIVTLPEGTEMVMPGDNIELAVELIAPIAIEDGTKFSIREGGRTVGAGVVSNISK</sequence>